<gene>
    <name evidence="1" type="primary">gltX</name>
    <name type="ordered locus">mma_1113</name>
</gene>
<evidence type="ECO:0000255" key="1">
    <source>
        <dbReference type="HAMAP-Rule" id="MF_00022"/>
    </source>
</evidence>
<evidence type="ECO:0000256" key="2">
    <source>
        <dbReference type="SAM" id="MobiDB-lite"/>
    </source>
</evidence>
<protein>
    <recommendedName>
        <fullName evidence="1">Glutamate--tRNA ligase</fullName>
        <ecNumber evidence="1">6.1.1.17</ecNumber>
    </recommendedName>
    <alternativeName>
        <fullName evidence="1">Glutamyl-tRNA synthetase</fullName>
        <shortName evidence="1">GluRS</shortName>
    </alternativeName>
</protein>
<accession>A6SX06</accession>
<organism>
    <name type="scientific">Janthinobacterium sp. (strain Marseille)</name>
    <name type="common">Minibacterium massiliensis</name>
    <dbReference type="NCBI Taxonomy" id="375286"/>
    <lineage>
        <taxon>Bacteria</taxon>
        <taxon>Pseudomonadati</taxon>
        <taxon>Pseudomonadota</taxon>
        <taxon>Betaproteobacteria</taxon>
        <taxon>Burkholderiales</taxon>
        <taxon>Oxalobacteraceae</taxon>
        <taxon>Janthinobacterium</taxon>
    </lineage>
</organism>
<dbReference type="EC" id="6.1.1.17" evidence="1"/>
<dbReference type="EMBL" id="CP000269">
    <property type="protein sequence ID" value="ABR88734.1"/>
    <property type="molecule type" value="Genomic_DNA"/>
</dbReference>
<dbReference type="RefSeq" id="WP_012078970.1">
    <property type="nucleotide sequence ID" value="NC_009659.1"/>
</dbReference>
<dbReference type="SMR" id="A6SX06"/>
<dbReference type="STRING" id="375286.mma_1113"/>
<dbReference type="KEGG" id="mms:mma_1113"/>
<dbReference type="eggNOG" id="COG0008">
    <property type="taxonomic scope" value="Bacteria"/>
</dbReference>
<dbReference type="HOGENOM" id="CLU_015768_6_0_4"/>
<dbReference type="OrthoDB" id="9807503at2"/>
<dbReference type="Proteomes" id="UP000006388">
    <property type="component" value="Chromosome"/>
</dbReference>
<dbReference type="GO" id="GO:0005829">
    <property type="term" value="C:cytosol"/>
    <property type="evidence" value="ECO:0007669"/>
    <property type="project" value="TreeGrafter"/>
</dbReference>
<dbReference type="GO" id="GO:0005524">
    <property type="term" value="F:ATP binding"/>
    <property type="evidence" value="ECO:0007669"/>
    <property type="project" value="UniProtKB-UniRule"/>
</dbReference>
<dbReference type="GO" id="GO:0004818">
    <property type="term" value="F:glutamate-tRNA ligase activity"/>
    <property type="evidence" value="ECO:0007669"/>
    <property type="project" value="UniProtKB-UniRule"/>
</dbReference>
<dbReference type="GO" id="GO:0000049">
    <property type="term" value="F:tRNA binding"/>
    <property type="evidence" value="ECO:0007669"/>
    <property type="project" value="InterPro"/>
</dbReference>
<dbReference type="GO" id="GO:0008270">
    <property type="term" value="F:zinc ion binding"/>
    <property type="evidence" value="ECO:0007669"/>
    <property type="project" value="InterPro"/>
</dbReference>
<dbReference type="GO" id="GO:0006424">
    <property type="term" value="P:glutamyl-tRNA aminoacylation"/>
    <property type="evidence" value="ECO:0007669"/>
    <property type="project" value="UniProtKB-UniRule"/>
</dbReference>
<dbReference type="CDD" id="cd00808">
    <property type="entry name" value="GluRS_core"/>
    <property type="match status" value="1"/>
</dbReference>
<dbReference type="FunFam" id="3.40.50.620:FF:000007">
    <property type="entry name" value="Glutamate--tRNA ligase"/>
    <property type="match status" value="1"/>
</dbReference>
<dbReference type="Gene3D" id="1.10.10.350">
    <property type="match status" value="1"/>
</dbReference>
<dbReference type="Gene3D" id="1.10.8.70">
    <property type="entry name" value="Glutamate-tRNA synthetase, class I, anticodon-binding domain 1"/>
    <property type="match status" value="1"/>
</dbReference>
<dbReference type="Gene3D" id="3.40.50.620">
    <property type="entry name" value="HUPs"/>
    <property type="match status" value="1"/>
</dbReference>
<dbReference type="HAMAP" id="MF_00022">
    <property type="entry name" value="Glu_tRNA_synth_type1"/>
    <property type="match status" value="1"/>
</dbReference>
<dbReference type="InterPro" id="IPR045462">
    <property type="entry name" value="aa-tRNA-synth_I_cd-bd"/>
</dbReference>
<dbReference type="InterPro" id="IPR020751">
    <property type="entry name" value="aa-tRNA-synth_I_codon-bd_sub2"/>
</dbReference>
<dbReference type="InterPro" id="IPR001412">
    <property type="entry name" value="aa-tRNA-synth_I_CS"/>
</dbReference>
<dbReference type="InterPro" id="IPR008925">
    <property type="entry name" value="aa_tRNA-synth_I_cd-bd_sf"/>
</dbReference>
<dbReference type="InterPro" id="IPR004527">
    <property type="entry name" value="Glu-tRNA-ligase_bac/mito"/>
</dbReference>
<dbReference type="InterPro" id="IPR020752">
    <property type="entry name" value="Glu-tRNA-synth_I_codon-bd_sub1"/>
</dbReference>
<dbReference type="InterPro" id="IPR000924">
    <property type="entry name" value="Glu/Gln-tRNA-synth"/>
</dbReference>
<dbReference type="InterPro" id="IPR020058">
    <property type="entry name" value="Glu/Gln-tRNA-synth_Ib_cat-dom"/>
</dbReference>
<dbReference type="InterPro" id="IPR049940">
    <property type="entry name" value="GluQ/Sye"/>
</dbReference>
<dbReference type="InterPro" id="IPR033910">
    <property type="entry name" value="GluRS_core"/>
</dbReference>
<dbReference type="InterPro" id="IPR014729">
    <property type="entry name" value="Rossmann-like_a/b/a_fold"/>
</dbReference>
<dbReference type="NCBIfam" id="TIGR00464">
    <property type="entry name" value="gltX_bact"/>
    <property type="match status" value="1"/>
</dbReference>
<dbReference type="PANTHER" id="PTHR43311">
    <property type="entry name" value="GLUTAMATE--TRNA LIGASE"/>
    <property type="match status" value="1"/>
</dbReference>
<dbReference type="PANTHER" id="PTHR43311:SF2">
    <property type="entry name" value="GLUTAMATE--TRNA LIGASE, MITOCHONDRIAL-RELATED"/>
    <property type="match status" value="1"/>
</dbReference>
<dbReference type="Pfam" id="PF19269">
    <property type="entry name" value="Anticodon_2"/>
    <property type="match status" value="1"/>
</dbReference>
<dbReference type="Pfam" id="PF00749">
    <property type="entry name" value="tRNA-synt_1c"/>
    <property type="match status" value="1"/>
</dbReference>
<dbReference type="PRINTS" id="PR00987">
    <property type="entry name" value="TRNASYNTHGLU"/>
</dbReference>
<dbReference type="SUPFAM" id="SSF48163">
    <property type="entry name" value="An anticodon-binding domain of class I aminoacyl-tRNA synthetases"/>
    <property type="match status" value="1"/>
</dbReference>
<dbReference type="SUPFAM" id="SSF52374">
    <property type="entry name" value="Nucleotidylyl transferase"/>
    <property type="match status" value="1"/>
</dbReference>
<dbReference type="PROSITE" id="PS00178">
    <property type="entry name" value="AA_TRNA_LIGASE_I"/>
    <property type="match status" value="1"/>
</dbReference>
<comment type="function">
    <text evidence="1">Catalyzes the attachment of glutamate to tRNA(Glu) in a two-step reaction: glutamate is first activated by ATP to form Glu-AMP and then transferred to the acceptor end of tRNA(Glu).</text>
</comment>
<comment type="catalytic activity">
    <reaction evidence="1">
        <text>tRNA(Glu) + L-glutamate + ATP = L-glutamyl-tRNA(Glu) + AMP + diphosphate</text>
        <dbReference type="Rhea" id="RHEA:23540"/>
        <dbReference type="Rhea" id="RHEA-COMP:9663"/>
        <dbReference type="Rhea" id="RHEA-COMP:9680"/>
        <dbReference type="ChEBI" id="CHEBI:29985"/>
        <dbReference type="ChEBI" id="CHEBI:30616"/>
        <dbReference type="ChEBI" id="CHEBI:33019"/>
        <dbReference type="ChEBI" id="CHEBI:78442"/>
        <dbReference type="ChEBI" id="CHEBI:78520"/>
        <dbReference type="ChEBI" id="CHEBI:456215"/>
        <dbReference type="EC" id="6.1.1.17"/>
    </reaction>
</comment>
<comment type="subunit">
    <text evidence="1">Monomer.</text>
</comment>
<comment type="subcellular location">
    <subcellularLocation>
        <location evidence="1">Cytoplasm</location>
    </subcellularLocation>
</comment>
<comment type="similarity">
    <text evidence="1">Belongs to the class-I aminoacyl-tRNA synthetase family. Glutamate--tRNA ligase type 1 subfamily.</text>
</comment>
<name>SYE_JANMA</name>
<proteinExistence type="inferred from homology"/>
<sequence>MTVRTRFAPSPTGYLHVGGARTALFSWAYARHFGGTFVLRIEDTDLERSTPEAVQAIIEGMEWLGLHHDEGPFYQMQRMDRYREVIGQMLAAGTAYHCYSSPEEVEAMRERQRAAGEKPRYDGTWRPEAGKTLPAIPEGRKPVVRFRNPTEGDVTWLDVVKGSITISNRELDDLVIARPDGTPTYNFCVAVDDSDMKITHVIRGDDHVNNTPRQINILQALGATLPHYGHLPMILGTDGEKLSKRHGAVSVMDYPAQGYLPEAMLNYLARLGWSHGDDEVFSMEQFTQWFDLDHLTKSPAQFNPEKLDWLNNHYIKQADNTRLAGLVRPMMEGLGAQFENAPDLAAVIALMKERVNTLNELAVAAMLFYRQPAADAALLAQHLTDAIRPALAQYVEQLKTVAWSKEALSATLKEVLAAHKLKMPQLAMPLRLLITGQLQTPSIDAVVELFGREVVLARLGKNL</sequence>
<reference key="1">
    <citation type="journal article" date="2007" name="PLoS Genet.">
        <title>Genome analysis of Minibacterium massiliensis highlights the convergent evolution of water-living bacteria.</title>
        <authorList>
            <person name="Audic S."/>
            <person name="Robert C."/>
            <person name="Campagna B."/>
            <person name="Parinello H."/>
            <person name="Claverie J.-M."/>
            <person name="Raoult D."/>
            <person name="Drancourt M."/>
        </authorList>
    </citation>
    <scope>NUCLEOTIDE SEQUENCE [LARGE SCALE GENOMIC DNA]</scope>
    <source>
        <strain>Marseille</strain>
    </source>
</reference>
<feature type="chain" id="PRO_0000330976" description="Glutamate--tRNA ligase">
    <location>
        <begin position="1"/>
        <end position="463"/>
    </location>
</feature>
<feature type="region of interest" description="Disordered" evidence="2">
    <location>
        <begin position="115"/>
        <end position="136"/>
    </location>
</feature>
<feature type="short sequence motif" description="'HIGH' region" evidence="1">
    <location>
        <begin position="9"/>
        <end position="19"/>
    </location>
</feature>
<feature type="short sequence motif" description="'KMSKS' region" evidence="1">
    <location>
        <begin position="241"/>
        <end position="245"/>
    </location>
</feature>
<feature type="compositionally biased region" description="Basic and acidic residues" evidence="2">
    <location>
        <begin position="115"/>
        <end position="129"/>
    </location>
</feature>
<feature type="binding site" evidence="1">
    <location>
        <position position="244"/>
    </location>
    <ligand>
        <name>ATP</name>
        <dbReference type="ChEBI" id="CHEBI:30616"/>
    </ligand>
</feature>
<keyword id="KW-0030">Aminoacyl-tRNA synthetase</keyword>
<keyword id="KW-0067">ATP-binding</keyword>
<keyword id="KW-0963">Cytoplasm</keyword>
<keyword id="KW-0436">Ligase</keyword>
<keyword id="KW-0547">Nucleotide-binding</keyword>
<keyword id="KW-0648">Protein biosynthesis</keyword>